<name>IFF6_CANAL</name>
<reference key="1">
    <citation type="journal article" date="2004" name="Proc. Natl. Acad. Sci. U.S.A.">
        <title>The diploid genome sequence of Candida albicans.</title>
        <authorList>
            <person name="Jones T."/>
            <person name="Federspiel N.A."/>
            <person name="Chibana H."/>
            <person name="Dungan J."/>
            <person name="Kalman S."/>
            <person name="Magee B.B."/>
            <person name="Newport G."/>
            <person name="Thorstenson Y.R."/>
            <person name="Agabian N."/>
            <person name="Magee P.T."/>
            <person name="Davis R.W."/>
            <person name="Scherer S."/>
        </authorList>
    </citation>
    <scope>NUCLEOTIDE SEQUENCE [LARGE SCALE GENOMIC DNA]</scope>
    <source>
        <strain>SC5314 / ATCC MYA-2876</strain>
    </source>
</reference>
<reference key="2">
    <citation type="journal article" date="2007" name="Genome Biol.">
        <title>Assembly of the Candida albicans genome into sixteen supercontigs aligned on the eight chromosomes.</title>
        <authorList>
            <person name="van het Hoog M."/>
            <person name="Rast T.J."/>
            <person name="Martchenko M."/>
            <person name="Grindle S."/>
            <person name="Dignard D."/>
            <person name="Hogues H."/>
            <person name="Cuomo C."/>
            <person name="Berriman M."/>
            <person name="Scherer S."/>
            <person name="Magee B.B."/>
            <person name="Whiteway M."/>
            <person name="Chibana H."/>
            <person name="Nantel A."/>
            <person name="Magee P.T."/>
        </authorList>
    </citation>
    <scope>GENOME REANNOTATION</scope>
    <source>
        <strain>SC5314 / ATCC MYA-2876</strain>
    </source>
</reference>
<reference key="3">
    <citation type="journal article" date="2013" name="Genome Biol.">
        <title>Assembly of a phased diploid Candida albicans genome facilitates allele-specific measurements and provides a simple model for repeat and indel structure.</title>
        <authorList>
            <person name="Muzzey D."/>
            <person name="Schwartz K."/>
            <person name="Weissman J.S."/>
            <person name="Sherlock G."/>
        </authorList>
    </citation>
    <scope>NUCLEOTIDE SEQUENCE [LARGE SCALE GENOMIC DNA]</scope>
    <scope>GENOME REANNOTATION</scope>
    <source>
        <strain>SC5314 / ATCC MYA-2876</strain>
    </source>
</reference>
<reference key="4">
    <citation type="journal article" date="2003" name="Yeast">
        <title>Genome-wide identification of fungal GPI proteins.</title>
        <authorList>
            <person name="De Groot P.W."/>
            <person name="Hellingwerf K.J."/>
            <person name="Klis F.M."/>
        </authorList>
    </citation>
    <scope>PREDICTION OF GPI-ANCHOR</scope>
</reference>
<reference key="5">
    <citation type="journal article" date="2007" name="Infect. Immun.">
        <title>Candida albicans Iff11, a secreted protein required for cell wall structure and virulence.</title>
        <authorList>
            <person name="Bates S."/>
            <person name="de la Rosa J.M."/>
            <person name="MacCallum D.M."/>
            <person name="Brown A.J."/>
            <person name="Gow N.A."/>
            <person name="Odds F.C."/>
        </authorList>
    </citation>
    <scope>IDENTIFICATION IN THE HYR1/IFF FAMILY</scope>
</reference>
<reference key="6">
    <citation type="journal article" date="2007" name="Mol. Cell. Proteomics">
        <title>Integrated proteomics and genomics strategies bring new insight into Candida albicans response upon macrophage interaction.</title>
        <authorList>
            <person name="Fernandez-Arenas E."/>
            <person name="Cabezon V."/>
            <person name="Bermejo C."/>
            <person name="Arroyo J."/>
            <person name="Nombela C."/>
            <person name="Diez-Orejas R."/>
            <person name="Gil C."/>
        </authorList>
    </citation>
    <scope>IDENTIFICATION BY MASS SPECTROMETRY</scope>
    <scope>INDUCTION</scope>
</reference>
<reference key="7">
    <citation type="journal article" date="2010" name="Mol. Microbiol.">
        <title>Temporal anatomy of an epigenetic switch in cell programming: the white-opaque transition of C. albicans.</title>
        <authorList>
            <person name="Lohse M.B."/>
            <person name="Johnson A.D."/>
        </authorList>
    </citation>
    <scope>INDUCTION</scope>
</reference>
<reference key="8">
    <citation type="journal article" date="2011" name="Eukaryot. Cell">
        <title>Unexpected role for a serine/threonine-rich domain in the Candida albicans Iff protein family.</title>
        <authorList>
            <person name="Boisrame A."/>
            <person name="Cornu A."/>
            <person name="Da Costa G."/>
            <person name="Richard M.L."/>
        </authorList>
    </citation>
    <scope>SUBCELLULAR LOCATION</scope>
</reference>
<reference key="9">
    <citation type="journal article" date="2011" name="J. Biol. Chem.">
        <title>Cap2-HAP complex is a critical transcriptional regulator that has dual but contrasting roles in regulation of iron homeostasis in Candida albicans.</title>
        <authorList>
            <person name="Singh R.P."/>
            <person name="Prasad H.K."/>
            <person name="Sinha I."/>
            <person name="Agarwal N."/>
            <person name="Natarajan K."/>
        </authorList>
    </citation>
    <scope>INDUCTION</scope>
</reference>
<organism>
    <name type="scientific">Candida albicans (strain SC5314 / ATCC MYA-2876)</name>
    <name type="common">Yeast</name>
    <dbReference type="NCBI Taxonomy" id="237561"/>
    <lineage>
        <taxon>Eukaryota</taxon>
        <taxon>Fungi</taxon>
        <taxon>Dikarya</taxon>
        <taxon>Ascomycota</taxon>
        <taxon>Saccharomycotina</taxon>
        <taxon>Pichiomycetes</taxon>
        <taxon>Debaryomycetaceae</taxon>
        <taxon>Candida/Lodderomyces clade</taxon>
        <taxon>Candida</taxon>
    </lineage>
</organism>
<gene>
    <name type="primary">IFF6</name>
    <name type="synonym">HYR10</name>
    <name type="ordered locus">CAALFM_C209130CA</name>
    <name type="ORF">CaO19.11553</name>
    <name type="ORF">CaO19.4072</name>
</gene>
<sequence length="1085" mass="105454">MLLKQIFLPFFVLFNAINAIDIYQNQVSRGTIDLSIGAITIHSGAYWSIIDNAISALVGTLTVQQDAGFYITGLNPLLGLQVELLGVLNSIKNDGIVSFNGLNSLVGPIYNLVGLSFQNNGEFYLSASGVAPPVFSITAADWHNNGLLVLAQAKRTSALANLGFPTGSIENQGSICLFGTAYQQLTSITGSGCISADRDSTIYIFSSLLPIATTQTLYLADRASSIVIQPVTLPATYTVRGFGNGNKVGISLPLLSVPLLGQPAYSYDPSSGVLTLRGLGVGLLSQRFQIGTGYDSSLLEIVTDDGAGLPTTLLGSVRYNGPVPNNAVPASCNCKYVPPSPGTDESSSLSSSTSEQSSSSATSVSASETSDTSSTQESSLSSEVSSTQEPSSSTPEPSSSSETSSTQESSSTEGPSSSTDSSTEASSSESSTAPSSSAEASSSTESSTEEPSSSTEGPSSSQESSSSEESSTQEPSSSTKESSSTEGPSSTEESSSTEGPSSSTDSSTDITSASSTDEQSSSGTGQSSTEDEPIDSTESDTSSATDSSTATDSSATNTDTNSESTDSSTATDTSSTDSNTASSTETNTDVTDSSTDSNTGATESSTATDTNTDATDSSTVSETGATDSSTATDTNTGATESSTDSNTGATDSSTATDTNTSATNTDTNTGSNTATNTDDNTATDTSSTETNTATNTDGTETNTGTTETNTDTSASNTDDNTGSNTATNTGGTDTNTDTNTGGTDTNTGTNTGGTDTKTGTNTATGTNTGATETNTATNTNGNGTNTNTGATDTATNTATGTNTNTGATDTNTNTNTGATVTNTATNTGDVSATKDIPSPTSTDEGSNNGGGSNNGSGSNNGSGNGSGSGSGSGNGSGDGSNNGSGNGSDNGSGSGNGSDNGSGSGSGSDNGSGSGSGSGSGSGNGSGSGSDNGSGSGNGSGSGSGSGSGSDNGSGSGSNNGSGNGSGNGSGSGSDNGSGNGSGSGSGSGSGNGSGNGSGSGSGSGSGNGSGSNNNNGSGSGSGSGNGQDNGIITSSIGQPGSSTSTQGPSSSNSATIPEQANSGNHIKFTLFNGLLIGLVPIVFM</sequence>
<dbReference type="EMBL" id="CP017624">
    <property type="protein sequence ID" value="AOW27899.1"/>
    <property type="molecule type" value="Genomic_DNA"/>
</dbReference>
<dbReference type="RefSeq" id="XP_714246.2">
    <property type="nucleotide sequence ID" value="XM_709153.2"/>
</dbReference>
<dbReference type="SMR" id="Q59XL0"/>
<dbReference type="STRING" id="237561.Q59XL0"/>
<dbReference type="GlyCosmos" id="Q59XL0">
    <property type="glycosylation" value="25 sites, No reported glycans"/>
</dbReference>
<dbReference type="EnsemblFungi" id="C2_09130C_A-T">
    <property type="protein sequence ID" value="C2_09130C_A-T-p1"/>
    <property type="gene ID" value="C2_09130C_A"/>
</dbReference>
<dbReference type="GeneID" id="3644087"/>
<dbReference type="KEGG" id="cal:CAALFM_C209130CA"/>
<dbReference type="CGD" id="CAL0000183650">
    <property type="gene designation" value="IFF6"/>
</dbReference>
<dbReference type="VEuPathDB" id="FungiDB:C2_09130C_A"/>
<dbReference type="HOGENOM" id="CLU_006199_0_0_1"/>
<dbReference type="InParanoid" id="Q59XL0"/>
<dbReference type="OrthoDB" id="4022214at2759"/>
<dbReference type="PRO" id="PR:Q59XL0"/>
<dbReference type="Proteomes" id="UP000000559">
    <property type="component" value="Chromosome 2"/>
</dbReference>
<dbReference type="GO" id="GO:0009986">
    <property type="term" value="C:cell surface"/>
    <property type="evidence" value="ECO:0000314"/>
    <property type="project" value="CGD"/>
</dbReference>
<dbReference type="GO" id="GO:0005576">
    <property type="term" value="C:extracellular region"/>
    <property type="evidence" value="ECO:0007669"/>
    <property type="project" value="UniProtKB-KW"/>
</dbReference>
<dbReference type="GO" id="GO:0009277">
    <property type="term" value="C:fungal-type cell wall"/>
    <property type="evidence" value="ECO:0000314"/>
    <property type="project" value="CGD"/>
</dbReference>
<dbReference type="GO" id="GO:0098552">
    <property type="term" value="C:side of membrane"/>
    <property type="evidence" value="ECO:0007669"/>
    <property type="project" value="UniProtKB-KW"/>
</dbReference>
<dbReference type="InterPro" id="IPR021031">
    <property type="entry name" value="Hyphal-reg_cell_wall_N"/>
</dbReference>
<dbReference type="PANTHER" id="PTHR31294">
    <property type="match status" value="1"/>
</dbReference>
<dbReference type="PANTHER" id="PTHR31294:SF8">
    <property type="entry name" value="KERATIN-ASSOCIATED PROTEIN 21-1-RELATED"/>
    <property type="match status" value="1"/>
</dbReference>
<dbReference type="Pfam" id="PF11765">
    <property type="entry name" value="Hyphal_reg_CWP"/>
    <property type="match status" value="1"/>
</dbReference>
<evidence type="ECO:0000250" key="1"/>
<evidence type="ECO:0000255" key="2"/>
<evidence type="ECO:0000255" key="3">
    <source>
        <dbReference type="PROSITE-ProRule" id="PRU00498"/>
    </source>
</evidence>
<evidence type="ECO:0000256" key="4">
    <source>
        <dbReference type="SAM" id="MobiDB-lite"/>
    </source>
</evidence>
<evidence type="ECO:0000269" key="5">
    <source>
    </source>
</evidence>
<evidence type="ECO:0000269" key="6">
    <source>
    </source>
</evidence>
<evidence type="ECO:0000269" key="7">
    <source>
    </source>
</evidence>
<evidence type="ECO:0000269" key="8">
    <source>
    </source>
</evidence>
<evidence type="ECO:0000305" key="9"/>
<feature type="signal peptide" evidence="2">
    <location>
        <begin position="1"/>
        <end position="19"/>
    </location>
</feature>
<feature type="chain" id="PRO_0000424764" description="Cell wall protein IFF6">
    <location>
        <begin position="20"/>
        <end position="1062"/>
    </location>
</feature>
<feature type="propeptide" id="PRO_0000424765" description="Removed in mature form" evidence="2">
    <location>
        <begin position="1063"/>
        <end position="1085"/>
    </location>
</feature>
<feature type="region of interest" description="Disordered" evidence="4">
    <location>
        <begin position="339"/>
        <end position="1060"/>
    </location>
</feature>
<feature type="compositionally biased region" description="Low complexity" evidence="4">
    <location>
        <begin position="342"/>
        <end position="528"/>
    </location>
</feature>
<feature type="compositionally biased region" description="Acidic residues" evidence="4">
    <location>
        <begin position="529"/>
        <end position="538"/>
    </location>
</feature>
<feature type="compositionally biased region" description="Low complexity" evidence="4">
    <location>
        <begin position="539"/>
        <end position="828"/>
    </location>
</feature>
<feature type="compositionally biased region" description="Gly residues" evidence="4">
    <location>
        <begin position="847"/>
        <end position="1010"/>
    </location>
</feature>
<feature type="compositionally biased region" description="Gly residues" evidence="4">
    <location>
        <begin position="1018"/>
        <end position="1028"/>
    </location>
</feature>
<feature type="compositionally biased region" description="Low complexity" evidence="4">
    <location>
        <begin position="1031"/>
        <end position="1052"/>
    </location>
</feature>
<feature type="lipid moiety-binding region" description="GPI-anchor amidated asparagine" evidence="2">
    <location>
        <position position="1062"/>
    </location>
</feature>
<feature type="glycosylation site" description="N-linked (GlcNAc...) asparagine" evidence="3">
    <location>
        <position position="659"/>
    </location>
</feature>
<feature type="glycosylation site" description="N-linked (GlcNAc...) asparagine" evidence="3">
    <location>
        <position position="782"/>
    </location>
</feature>
<feature type="glycosylation site" description="N-linked (GlcNAc...) asparagine" evidence="3">
    <location>
        <position position="854"/>
    </location>
</feature>
<feature type="glycosylation site" description="N-linked (GlcNAc...) asparagine" evidence="3">
    <location>
        <position position="860"/>
    </location>
</feature>
<feature type="glycosylation site" description="N-linked (GlcNAc...) asparagine" evidence="3">
    <location>
        <position position="864"/>
    </location>
</feature>
<feature type="glycosylation site" description="N-linked (GlcNAc...) asparagine" evidence="3">
    <location>
        <position position="874"/>
    </location>
</feature>
<feature type="glycosylation site" description="N-linked (GlcNAc...) asparagine" evidence="3">
    <location>
        <position position="882"/>
    </location>
</feature>
<feature type="glycosylation site" description="N-linked (GlcNAc...) asparagine" evidence="3">
    <location>
        <position position="886"/>
    </location>
</feature>
<feature type="glycosylation site" description="N-linked (GlcNAc...) asparagine" evidence="3">
    <location>
        <position position="890"/>
    </location>
</feature>
<feature type="glycosylation site" description="N-linked (GlcNAc...) asparagine" evidence="3">
    <location>
        <position position="896"/>
    </location>
</feature>
<feature type="glycosylation site" description="N-linked (GlcNAc...) asparagine" evidence="3">
    <location>
        <position position="900"/>
    </location>
</feature>
<feature type="glycosylation site" description="N-linked (GlcNAc...) asparagine" evidence="3">
    <location>
        <position position="910"/>
    </location>
</feature>
<feature type="glycosylation site" description="N-linked (GlcNAc...) asparagine" evidence="3">
    <location>
        <position position="924"/>
    </location>
</feature>
<feature type="glycosylation site" description="N-linked (GlcNAc...) asparagine" evidence="3">
    <location>
        <position position="932"/>
    </location>
</feature>
<feature type="glycosylation site" description="N-linked (GlcNAc...) asparagine" evidence="3">
    <location>
        <position position="938"/>
    </location>
</feature>
<feature type="glycosylation site" description="N-linked (GlcNAc...) asparagine" evidence="3">
    <location>
        <position position="952"/>
    </location>
</feature>
<feature type="glycosylation site" description="N-linked (GlcNAc...) asparagine" evidence="3">
    <location>
        <position position="960"/>
    </location>
</feature>
<feature type="glycosylation site" description="N-linked (GlcNAc...) asparagine" evidence="3">
    <location>
        <position position="964"/>
    </location>
</feature>
<feature type="glycosylation site" description="N-linked (GlcNAc...) asparagine" evidence="3">
    <location>
        <position position="968"/>
    </location>
</feature>
<feature type="glycosylation site" description="N-linked (GlcNAc...) asparagine" evidence="3">
    <location>
        <position position="976"/>
    </location>
</feature>
<feature type="glycosylation site" description="N-linked (GlcNAc...) asparagine" evidence="3">
    <location>
        <position position="980"/>
    </location>
</feature>
<feature type="glycosylation site" description="N-linked (GlcNAc...) asparagine" evidence="3">
    <location>
        <position position="992"/>
    </location>
</feature>
<feature type="glycosylation site" description="N-linked (GlcNAc...) asparagine" evidence="3">
    <location>
        <position position="996"/>
    </location>
</feature>
<feature type="glycosylation site" description="N-linked (GlcNAc...) asparagine" evidence="3">
    <location>
        <position position="1008"/>
    </location>
</feature>
<feature type="glycosylation site" description="N-linked (GlcNAc...) asparagine" evidence="3">
    <location>
        <position position="1016"/>
    </location>
</feature>
<proteinExistence type="evidence at protein level"/>
<comment type="function">
    <text evidence="1">GPI-anchored cell wall protein involved in cell wall organization, hyphal growth, as well as in host-fungal interaction and virulence.</text>
</comment>
<comment type="subcellular location">
    <subcellularLocation>
        <location evidence="8">Secreted</location>
        <location evidence="8">Cell wall</location>
    </subcellularLocation>
    <subcellularLocation>
        <location evidence="9">Membrane</location>
        <topology evidence="9">Lipid-anchor</topology>
        <topology evidence="9">GPI-anchor</topology>
    </subcellularLocation>
</comment>
<comment type="induction">
    <text evidence="5 6 7">Opaque-specific transcript. Repressed by HAP43 and induced by macrophages.</text>
</comment>
<comment type="PTM">
    <text>The GPI-anchor is attached to the protein in the endoplasmic reticulum and serves to target the protein to the cell surface. There, the glucosamine-inositol phospholipid moiety is cleaved off and the GPI-modified mannoprotein is covalently attached via its lipidless GPI glycan remnant to the 1,6-beta-glucan of the outer cell wall layer.</text>
</comment>
<comment type="similarity">
    <text evidence="9">Belongs to the HYR1/IFF family.</text>
</comment>
<keyword id="KW-0134">Cell wall</keyword>
<keyword id="KW-0325">Glycoprotein</keyword>
<keyword id="KW-0336">GPI-anchor</keyword>
<keyword id="KW-0449">Lipoprotein</keyword>
<keyword id="KW-0472">Membrane</keyword>
<keyword id="KW-1185">Reference proteome</keyword>
<keyword id="KW-0964">Secreted</keyword>
<keyword id="KW-0732">Signal</keyword>
<keyword id="KW-0843">Virulence</keyword>
<protein>
    <recommendedName>
        <fullName>Cell wall protein IFF6</fullName>
    </recommendedName>
    <alternativeName>
        <fullName>Adhesin-like protein IFF6</fullName>
    </alternativeName>
    <alternativeName>
        <fullName>Hyphally regulated cell wall protein 10</fullName>
    </alternativeName>
</protein>
<accession>Q59XL0</accession>
<accession>A0A1D8PIC5</accession>
<accession>Q59X60</accession>